<feature type="chain" id="PRO_0000297307" description="3-methyl-2-oxobutanoate hydroxymethyltransferase">
    <location>
        <begin position="1"/>
        <end position="275"/>
    </location>
</feature>
<feature type="active site" description="Proton acceptor" evidence="1">
    <location>
        <position position="187"/>
    </location>
</feature>
<feature type="binding site" evidence="1">
    <location>
        <begin position="49"/>
        <end position="50"/>
    </location>
    <ligand>
        <name>3-methyl-2-oxobutanoate</name>
        <dbReference type="ChEBI" id="CHEBI:11851"/>
    </ligand>
</feature>
<feature type="binding site" evidence="1">
    <location>
        <position position="49"/>
    </location>
    <ligand>
        <name>Mg(2+)</name>
        <dbReference type="ChEBI" id="CHEBI:18420"/>
    </ligand>
</feature>
<feature type="binding site" evidence="1">
    <location>
        <position position="88"/>
    </location>
    <ligand>
        <name>3-methyl-2-oxobutanoate</name>
        <dbReference type="ChEBI" id="CHEBI:11851"/>
    </ligand>
</feature>
<feature type="binding site" evidence="1">
    <location>
        <position position="88"/>
    </location>
    <ligand>
        <name>Mg(2+)</name>
        <dbReference type="ChEBI" id="CHEBI:18420"/>
    </ligand>
</feature>
<feature type="binding site" evidence="1">
    <location>
        <position position="118"/>
    </location>
    <ligand>
        <name>3-methyl-2-oxobutanoate</name>
        <dbReference type="ChEBI" id="CHEBI:11851"/>
    </ligand>
</feature>
<feature type="binding site" evidence="1">
    <location>
        <position position="120"/>
    </location>
    <ligand>
        <name>Mg(2+)</name>
        <dbReference type="ChEBI" id="CHEBI:18420"/>
    </ligand>
</feature>
<comment type="function">
    <text evidence="1">Catalyzes the reversible reaction in which hydroxymethyl group from 5,10-methylenetetrahydrofolate is transferred onto alpha-ketoisovalerate to form ketopantoate.</text>
</comment>
<comment type="catalytic activity">
    <reaction evidence="1">
        <text>3-methyl-2-oxobutanoate + (6R)-5,10-methylene-5,6,7,8-tetrahydrofolate + H2O = 2-dehydropantoate + (6S)-5,6,7,8-tetrahydrofolate</text>
        <dbReference type="Rhea" id="RHEA:11824"/>
        <dbReference type="ChEBI" id="CHEBI:11561"/>
        <dbReference type="ChEBI" id="CHEBI:11851"/>
        <dbReference type="ChEBI" id="CHEBI:15377"/>
        <dbReference type="ChEBI" id="CHEBI:15636"/>
        <dbReference type="ChEBI" id="CHEBI:57453"/>
        <dbReference type="EC" id="2.1.2.11"/>
    </reaction>
</comment>
<comment type="cofactor">
    <cofactor evidence="1">
        <name>Mg(2+)</name>
        <dbReference type="ChEBI" id="CHEBI:18420"/>
    </cofactor>
    <text evidence="1">Binds 1 Mg(2+) ion per subunit.</text>
</comment>
<comment type="pathway">
    <text evidence="1">Cofactor biosynthesis; (R)-pantothenate biosynthesis; (R)-pantoate from 3-methyl-2-oxobutanoate: step 1/2.</text>
</comment>
<comment type="subunit">
    <text evidence="1">Homodecamer; pentamer of dimers.</text>
</comment>
<comment type="subcellular location">
    <subcellularLocation>
        <location evidence="1">Cytoplasm</location>
    </subcellularLocation>
</comment>
<comment type="similarity">
    <text evidence="1">Belongs to the PanB family.</text>
</comment>
<organism>
    <name type="scientific">Nitrobacter hamburgensis (strain DSM 10229 / NCIMB 13809 / X14)</name>
    <dbReference type="NCBI Taxonomy" id="323097"/>
    <lineage>
        <taxon>Bacteria</taxon>
        <taxon>Pseudomonadati</taxon>
        <taxon>Pseudomonadota</taxon>
        <taxon>Alphaproteobacteria</taxon>
        <taxon>Hyphomicrobiales</taxon>
        <taxon>Nitrobacteraceae</taxon>
        <taxon>Nitrobacter</taxon>
    </lineage>
</organism>
<protein>
    <recommendedName>
        <fullName evidence="1">3-methyl-2-oxobutanoate hydroxymethyltransferase</fullName>
        <ecNumber evidence="1">2.1.2.11</ecNumber>
    </recommendedName>
    <alternativeName>
        <fullName evidence="1">Ketopantoate hydroxymethyltransferase</fullName>
        <shortName evidence="1">KPHMT</shortName>
    </alternativeName>
</protein>
<dbReference type="EC" id="2.1.2.11" evidence="1"/>
<dbReference type="EMBL" id="CP000319">
    <property type="protein sequence ID" value="ABE62500.1"/>
    <property type="molecule type" value="Genomic_DNA"/>
</dbReference>
<dbReference type="RefSeq" id="WP_011510182.1">
    <property type="nucleotide sequence ID" value="NC_007964.1"/>
</dbReference>
<dbReference type="SMR" id="Q1QMP7"/>
<dbReference type="STRING" id="323097.Nham_1683"/>
<dbReference type="KEGG" id="nha:Nham_1683"/>
<dbReference type="eggNOG" id="COG0413">
    <property type="taxonomic scope" value="Bacteria"/>
</dbReference>
<dbReference type="HOGENOM" id="CLU_036645_1_0_5"/>
<dbReference type="OrthoDB" id="9781789at2"/>
<dbReference type="UniPathway" id="UPA00028">
    <property type="reaction ID" value="UER00003"/>
</dbReference>
<dbReference type="Proteomes" id="UP000001953">
    <property type="component" value="Chromosome"/>
</dbReference>
<dbReference type="GO" id="GO:0005737">
    <property type="term" value="C:cytoplasm"/>
    <property type="evidence" value="ECO:0007669"/>
    <property type="project" value="UniProtKB-SubCell"/>
</dbReference>
<dbReference type="GO" id="GO:0003864">
    <property type="term" value="F:3-methyl-2-oxobutanoate hydroxymethyltransferase activity"/>
    <property type="evidence" value="ECO:0007669"/>
    <property type="project" value="UniProtKB-UniRule"/>
</dbReference>
<dbReference type="GO" id="GO:0000287">
    <property type="term" value="F:magnesium ion binding"/>
    <property type="evidence" value="ECO:0007669"/>
    <property type="project" value="TreeGrafter"/>
</dbReference>
<dbReference type="GO" id="GO:0015940">
    <property type="term" value="P:pantothenate biosynthetic process"/>
    <property type="evidence" value="ECO:0007669"/>
    <property type="project" value="UniProtKB-UniRule"/>
</dbReference>
<dbReference type="CDD" id="cd06557">
    <property type="entry name" value="KPHMT-like"/>
    <property type="match status" value="1"/>
</dbReference>
<dbReference type="FunFam" id="3.20.20.60:FF:000003">
    <property type="entry name" value="3-methyl-2-oxobutanoate hydroxymethyltransferase"/>
    <property type="match status" value="1"/>
</dbReference>
<dbReference type="Gene3D" id="3.20.20.60">
    <property type="entry name" value="Phosphoenolpyruvate-binding domains"/>
    <property type="match status" value="1"/>
</dbReference>
<dbReference type="HAMAP" id="MF_00156">
    <property type="entry name" value="PanB"/>
    <property type="match status" value="1"/>
</dbReference>
<dbReference type="InterPro" id="IPR003700">
    <property type="entry name" value="Pantoate_hydroxy_MeTrfase"/>
</dbReference>
<dbReference type="InterPro" id="IPR015813">
    <property type="entry name" value="Pyrv/PenolPyrv_kinase-like_dom"/>
</dbReference>
<dbReference type="InterPro" id="IPR040442">
    <property type="entry name" value="Pyrv_kinase-like_dom_sf"/>
</dbReference>
<dbReference type="NCBIfam" id="TIGR00222">
    <property type="entry name" value="panB"/>
    <property type="match status" value="1"/>
</dbReference>
<dbReference type="NCBIfam" id="NF001452">
    <property type="entry name" value="PRK00311.1"/>
    <property type="match status" value="1"/>
</dbReference>
<dbReference type="PANTHER" id="PTHR20881">
    <property type="entry name" value="3-METHYL-2-OXOBUTANOATE HYDROXYMETHYLTRANSFERASE"/>
    <property type="match status" value="1"/>
</dbReference>
<dbReference type="PANTHER" id="PTHR20881:SF0">
    <property type="entry name" value="3-METHYL-2-OXOBUTANOATE HYDROXYMETHYLTRANSFERASE"/>
    <property type="match status" value="1"/>
</dbReference>
<dbReference type="Pfam" id="PF02548">
    <property type="entry name" value="Pantoate_transf"/>
    <property type="match status" value="1"/>
</dbReference>
<dbReference type="PIRSF" id="PIRSF000388">
    <property type="entry name" value="Pantoate_hydroxy_MeTrfase"/>
    <property type="match status" value="1"/>
</dbReference>
<dbReference type="SUPFAM" id="SSF51621">
    <property type="entry name" value="Phosphoenolpyruvate/pyruvate domain"/>
    <property type="match status" value="1"/>
</dbReference>
<accession>Q1QMP7</accession>
<keyword id="KW-0963">Cytoplasm</keyword>
<keyword id="KW-0460">Magnesium</keyword>
<keyword id="KW-0479">Metal-binding</keyword>
<keyword id="KW-0566">Pantothenate biosynthesis</keyword>
<keyword id="KW-1185">Reference proteome</keyword>
<keyword id="KW-0808">Transferase</keyword>
<evidence type="ECO:0000255" key="1">
    <source>
        <dbReference type="HAMAP-Rule" id="MF_00156"/>
    </source>
</evidence>
<gene>
    <name evidence="1" type="primary">panB</name>
    <name type="ordered locus">Nham_1683</name>
</gene>
<sequence length="275" mass="29493">MSVQSAIRRRTAPDIRARKNGDPIVMLTSYHAHTAALVDRHCDVILVGDSLGNVMHGFETTVPVTLDMMILQGRAVMRGSQQALVVVDMPFGSYEASKEQAFHSAARILKETLCGAVKLEGGVKMAETIAFLTARGVPVMGHVGLTPQSINTLGSFRAQGREEGTWRPIEDDARAVAEAGAFSMVIEAVAEPLARKITESVAIPTIGIGASPACDGQVLVLEDMLGLSPRAPKFVRRYGELGPMIEAAIEGYARDVRSRAFPGPEHVYAMKPKAS</sequence>
<reference key="1">
    <citation type="submission" date="2006-03" db="EMBL/GenBank/DDBJ databases">
        <title>Complete sequence of chromosome of Nitrobacter hamburgensis X14.</title>
        <authorList>
            <consortium name="US DOE Joint Genome Institute"/>
            <person name="Copeland A."/>
            <person name="Lucas S."/>
            <person name="Lapidus A."/>
            <person name="Barry K."/>
            <person name="Detter J.C."/>
            <person name="Glavina del Rio T."/>
            <person name="Hammon N."/>
            <person name="Israni S."/>
            <person name="Dalin E."/>
            <person name="Tice H."/>
            <person name="Pitluck S."/>
            <person name="Chain P."/>
            <person name="Malfatti S."/>
            <person name="Shin M."/>
            <person name="Vergez L."/>
            <person name="Schmutz J."/>
            <person name="Larimer F."/>
            <person name="Land M."/>
            <person name="Hauser L."/>
            <person name="Kyrpides N."/>
            <person name="Ivanova N."/>
            <person name="Ward B."/>
            <person name="Arp D."/>
            <person name="Klotz M."/>
            <person name="Stein L."/>
            <person name="O'Mullan G."/>
            <person name="Starkenburg S."/>
            <person name="Sayavedra L."/>
            <person name="Poret-Peterson A.T."/>
            <person name="Gentry M.E."/>
            <person name="Bruce D."/>
            <person name="Richardson P."/>
        </authorList>
    </citation>
    <scope>NUCLEOTIDE SEQUENCE [LARGE SCALE GENOMIC DNA]</scope>
    <source>
        <strain>DSM 10229 / NCIMB 13809 / X14</strain>
    </source>
</reference>
<proteinExistence type="inferred from homology"/>
<name>PANB_NITHX</name>